<sequence>MSDVEIKVENIVASATLGKSLELPKIAPALENVEYNLEQFPGLVFKLKDPKTAALIFGSGKLVCTGAKCIEDSIKAIHMTVDKIRELDTEIPEEFEIKIQNIVASANLGKVLNLEAVALDLENTEYEPEQFPGLVYRLSDPKVVLLLFGSGKVVCTGAKTADQALLGVQKTKERLIELYLIEE</sequence>
<keyword id="KW-0238">DNA-binding</keyword>
<keyword id="KW-1185">Reference proteome</keyword>
<keyword id="KW-0677">Repeat</keyword>
<keyword id="KW-0804">Transcription</keyword>
<keyword id="KW-0805">Transcription regulation</keyword>
<evidence type="ECO:0000255" key="1">
    <source>
        <dbReference type="HAMAP-Rule" id="MF_00408"/>
    </source>
</evidence>
<feature type="chain" id="PRO_1000049882" description="TATA-box-binding protein">
    <location>
        <begin position="1"/>
        <end position="183"/>
    </location>
</feature>
<feature type="repeat" description="1">
    <location>
        <begin position="8"/>
        <end position="84"/>
    </location>
</feature>
<feature type="repeat" description="2">
    <location>
        <begin position="99"/>
        <end position="175"/>
    </location>
</feature>
<gene>
    <name evidence="1" type="primary">tbp</name>
    <name type="ordered locus">Msp_1097</name>
</gene>
<name>TBP_METST</name>
<comment type="function">
    <text evidence="1">General factor that plays a role in the activation of archaeal genes transcribed by RNA polymerase. Binds specifically to the TATA box promoter element which lies close to the position of transcription initiation.</text>
</comment>
<comment type="similarity">
    <text evidence="1">Belongs to the TBP family.</text>
</comment>
<dbReference type="EMBL" id="CP000102">
    <property type="protein sequence ID" value="ABC57480.1"/>
    <property type="molecule type" value="Genomic_DNA"/>
</dbReference>
<dbReference type="RefSeq" id="WP_011406679.1">
    <property type="nucleotide sequence ID" value="NC_007681.1"/>
</dbReference>
<dbReference type="SMR" id="Q2NFC3"/>
<dbReference type="STRING" id="339860.Msp_1097"/>
<dbReference type="KEGG" id="mst:Msp_1097"/>
<dbReference type="eggNOG" id="arCOG01764">
    <property type="taxonomic scope" value="Archaea"/>
</dbReference>
<dbReference type="HOGENOM" id="CLU_060161_4_3_2"/>
<dbReference type="OrthoDB" id="350539at2157"/>
<dbReference type="Proteomes" id="UP000001931">
    <property type="component" value="Chromosome"/>
</dbReference>
<dbReference type="GO" id="GO:0003677">
    <property type="term" value="F:DNA binding"/>
    <property type="evidence" value="ECO:0007669"/>
    <property type="project" value="UniProtKB-KW"/>
</dbReference>
<dbReference type="GO" id="GO:0003700">
    <property type="term" value="F:DNA-binding transcription factor activity"/>
    <property type="evidence" value="ECO:0007669"/>
    <property type="project" value="UniProtKB-UniRule"/>
</dbReference>
<dbReference type="GO" id="GO:0006352">
    <property type="term" value="P:DNA-templated transcription initiation"/>
    <property type="evidence" value="ECO:0007669"/>
    <property type="project" value="InterPro"/>
</dbReference>
<dbReference type="CDD" id="cd04518">
    <property type="entry name" value="TBP_archaea"/>
    <property type="match status" value="1"/>
</dbReference>
<dbReference type="FunFam" id="3.30.310.10:FF:000007">
    <property type="entry name" value="TATA-box-binding protein"/>
    <property type="match status" value="1"/>
</dbReference>
<dbReference type="Gene3D" id="3.30.310.10">
    <property type="entry name" value="TATA-Binding Protein"/>
    <property type="match status" value="2"/>
</dbReference>
<dbReference type="HAMAP" id="MF_00408">
    <property type="entry name" value="TATA_bind_prot_arch"/>
    <property type="match status" value="1"/>
</dbReference>
<dbReference type="InterPro" id="IPR000814">
    <property type="entry name" value="TBP"/>
</dbReference>
<dbReference type="InterPro" id="IPR033711">
    <property type="entry name" value="TBP_archaea"/>
</dbReference>
<dbReference type="InterPro" id="IPR030491">
    <property type="entry name" value="TBP_CS"/>
</dbReference>
<dbReference type="InterPro" id="IPR012295">
    <property type="entry name" value="TBP_dom_sf"/>
</dbReference>
<dbReference type="NCBIfam" id="NF001593">
    <property type="entry name" value="PRK00394.1-2"/>
    <property type="match status" value="1"/>
</dbReference>
<dbReference type="NCBIfam" id="NF001601">
    <property type="entry name" value="PRK00394.2-6"/>
    <property type="match status" value="1"/>
</dbReference>
<dbReference type="PANTHER" id="PTHR10126">
    <property type="entry name" value="TATA-BOX BINDING PROTEIN"/>
    <property type="match status" value="1"/>
</dbReference>
<dbReference type="Pfam" id="PF00352">
    <property type="entry name" value="TBP"/>
    <property type="match status" value="2"/>
</dbReference>
<dbReference type="PRINTS" id="PR00686">
    <property type="entry name" value="TIFACTORIID"/>
</dbReference>
<dbReference type="SUPFAM" id="SSF55945">
    <property type="entry name" value="TATA-box binding protein-like"/>
    <property type="match status" value="2"/>
</dbReference>
<dbReference type="PROSITE" id="PS00351">
    <property type="entry name" value="TFIID"/>
    <property type="match status" value="1"/>
</dbReference>
<proteinExistence type="inferred from homology"/>
<accession>Q2NFC3</accession>
<reference key="1">
    <citation type="journal article" date="2006" name="J. Bacteriol.">
        <title>The genome sequence of Methanosphaera stadtmanae reveals why this human intestinal archaeon is restricted to methanol and H2 for methane formation and ATP synthesis.</title>
        <authorList>
            <person name="Fricke W.F."/>
            <person name="Seedorf H."/>
            <person name="Henne A."/>
            <person name="Kruer M."/>
            <person name="Liesegang H."/>
            <person name="Hedderich R."/>
            <person name="Gottschalk G."/>
            <person name="Thauer R.K."/>
        </authorList>
    </citation>
    <scope>NUCLEOTIDE SEQUENCE [LARGE SCALE GENOMIC DNA]</scope>
    <source>
        <strain>ATCC 43021 / DSM 3091 / JCM 11832 / MCB-3</strain>
    </source>
</reference>
<organism>
    <name type="scientific">Methanosphaera stadtmanae (strain ATCC 43021 / DSM 3091 / JCM 11832 / MCB-3)</name>
    <dbReference type="NCBI Taxonomy" id="339860"/>
    <lineage>
        <taxon>Archaea</taxon>
        <taxon>Methanobacteriati</taxon>
        <taxon>Methanobacteriota</taxon>
        <taxon>Methanomada group</taxon>
        <taxon>Methanobacteria</taxon>
        <taxon>Methanobacteriales</taxon>
        <taxon>Methanobacteriaceae</taxon>
        <taxon>Methanosphaera</taxon>
    </lineage>
</organism>
<protein>
    <recommendedName>
        <fullName evidence="1">TATA-box-binding protein</fullName>
    </recommendedName>
    <alternativeName>
        <fullName evidence="1">Box A-binding protein</fullName>
        <shortName evidence="1">BAP</shortName>
    </alternativeName>
    <alternativeName>
        <fullName evidence="1">TATA sequence-binding protein</fullName>
        <shortName evidence="1">TBP</shortName>
    </alternativeName>
    <alternativeName>
        <fullName evidence="1">TATA-box factor</fullName>
    </alternativeName>
</protein>